<keyword id="KW-0244">Early protein</keyword>
<keyword id="KW-1035">Host cytoplasm</keyword>
<keyword id="KW-1048">Host nucleus</keyword>
<keyword id="KW-0945">Host-virus interaction</keyword>
<keyword id="KW-1119">Modulation of host cell apoptosis by virus</keyword>
<keyword id="KW-0597">Phosphoprotein</keyword>
<keyword id="KW-1185">Reference proteome</keyword>
<evidence type="ECO:0000250" key="1">
    <source>
        <dbReference type="UniProtKB" id="P03243"/>
    </source>
</evidence>
<evidence type="ECO:0000250" key="2">
    <source>
        <dbReference type="UniProtKB" id="P03244"/>
    </source>
</evidence>
<evidence type="ECO:0000256" key="3">
    <source>
        <dbReference type="SAM" id="MobiDB-lite"/>
    </source>
</evidence>
<evidence type="ECO:0000305" key="4"/>
<dbReference type="EMBL" id="J04368">
    <property type="protein sequence ID" value="AAA42472.1"/>
    <property type="status" value="ALT_INIT"/>
    <property type="molecule type" value="Genomic_DNA"/>
</dbReference>
<dbReference type="EMBL" id="U77082">
    <property type="protein sequence ID" value="AAB38713.1"/>
    <property type="molecule type" value="Genomic_DNA"/>
</dbReference>
<dbReference type="PIR" id="C34165">
    <property type="entry name" value="ERADC2"/>
</dbReference>
<dbReference type="RefSeq" id="AP_000610.1">
    <property type="nucleotide sequence ID" value="AC_000020.1"/>
</dbReference>
<dbReference type="SMR" id="P14266"/>
<dbReference type="Proteomes" id="UP000118097">
    <property type="component" value="Segment"/>
</dbReference>
<dbReference type="GO" id="GO:0030430">
    <property type="term" value="C:host cell cytoplasm"/>
    <property type="evidence" value="ECO:0000250"/>
    <property type="project" value="UniProtKB"/>
</dbReference>
<dbReference type="GO" id="GO:0042025">
    <property type="term" value="C:host cell nucleus"/>
    <property type="evidence" value="ECO:0007669"/>
    <property type="project" value="UniProtKB-SubCell"/>
</dbReference>
<dbReference type="GO" id="GO:1990756">
    <property type="term" value="F:ubiquitin-like ligase-substrate adaptor activity"/>
    <property type="evidence" value="ECO:0000250"/>
    <property type="project" value="UniProtKB"/>
</dbReference>
<dbReference type="GO" id="GO:0052150">
    <property type="term" value="P:symbiont-mediated perturbation of host apoptosis"/>
    <property type="evidence" value="ECO:0007669"/>
    <property type="project" value="UniProtKB-KW"/>
</dbReference>
<dbReference type="GO" id="GO:0039648">
    <property type="term" value="P:symbiont-mediated perturbation of host ubiquitin-like protein modification"/>
    <property type="evidence" value="ECO:0000250"/>
    <property type="project" value="UniProtKB"/>
</dbReference>
<dbReference type="InterPro" id="IPR002612">
    <property type="entry name" value="Adeno_E1B_55kDa"/>
</dbReference>
<dbReference type="InterPro" id="IPR011050">
    <property type="entry name" value="Pectin_lyase_fold/virulence"/>
</dbReference>
<dbReference type="Pfam" id="PF01696">
    <property type="entry name" value="Adeno_E1B_55K"/>
    <property type="match status" value="1"/>
</dbReference>
<dbReference type="SUPFAM" id="SSF51126">
    <property type="entry name" value="Pectin lyase-like"/>
    <property type="match status" value="1"/>
</dbReference>
<protein>
    <recommendedName>
        <fullName>E1B 55 kDa protein</fullName>
        <shortName>E1B-55K</shortName>
    </recommendedName>
    <alternativeName>
        <fullName>E1B protein, large T-antigen</fullName>
    </alternativeName>
    <alternativeName>
        <fullName>E1B-495R</fullName>
    </alternativeName>
</protein>
<sequence>MEQNADMEPDRQVNQRPPRFRARGAGVRGRGRVRRSAFSRGQRRPIIRVDDLQLPDPLYVMQALQRDHTLEMPRGQVDFSWIEAEERRVGPTDEWYFEAVKTYKAKPGDDLQTIIKNYAKISLECGAVYEINSKIRVTGACYIIGNCAVLRPNLPAGEAMFEVLNVDFIPSIGFMERIVFSNVIFDCRTTATVVCCISERNTLFHNCVFSGPHMLCLDLRAGAEVRGCHFVGAVCALRSKGLYSIRVKNSIFEKCAFGVVTGSKASISHCMFKDCTCSIMLGGQGTIAHSQFIVTTSAEAPMNLQLCTCEGNGSHVVPLGNIHFASHREASWPTFYANTLVRVRLYMGRRRGVFHPKQSTLSMCVIAAPRGVVQRIYLFGVYDATCAIMQLGEAGNAASERLCTCGFRHSTPSLRATYVTDTRIDRELNSQDTAEFFSSDEDNF</sequence>
<proteinExistence type="inferred from homology"/>
<organismHost>
    <name type="scientific">Canis lupus familiaris</name>
    <name type="common">Dog</name>
    <name type="synonym">Canis familiaris</name>
    <dbReference type="NCBI Taxonomy" id="9615"/>
</organismHost>
<name>E1B55_ADECT</name>
<comment type="function">
    <text evidence="1">Plays a major role to prevent cellular inhibition of viral genome replication. Assembles an SCF-like E3 ubiquitin ligase complex based on the cellular proteins ELOB, ELOC, CUL5 and RBX1, in cooperation with viral E4orf6. This viral RING-type ligase ubiquitinates cellular substrates and targets them to proteasomal degradation: TP53/p53, LIG4, MRE11-RAD50-NBS1 (MRN) complex, ITGA3, DAXX and BLM. E1B-55K probably acts as the substrate-specific adapter of the SCF-like E3 ubiquitin ligase complex. Degradation of host TP53/p53 activity is essential for preventing E1A-induced TP53 accumulation that would otherwise lead to cell apoptosis and growth arrest. E1B-55K also inactivates TP53 transcription-factor activity by binding its transactivation domain. E1B-55K also functions as a SUMO1 E3 ligase for TP53 which causes the latter to be sequestered in promyelocytic leukemia (PML) nuclear bodies thereby contributing to maximal inhibition of TP53 function.</text>
</comment>
<comment type="subunit">
    <text evidence="1 2">Interacts with host PML-4 and PML-5; this interaction promotes efficient subnuclear targeting of E1B-55K to PML nuclear bodies. Interacts with E4-ORF3 protein (By similarity). Interacts with E4-ORF6 protein (By similarity).</text>
</comment>
<comment type="subcellular location">
    <subcellularLocation>
        <location evidence="1">Host nucleus</location>
    </subcellularLocation>
    <subcellularLocation>
        <location evidence="1">Host cytoplasm</location>
    </subcellularLocation>
    <text evidence="1">Colocalizes with host TP53 to host PML nuclear bodies. PML localization of E1B-55K is necessary for E1B-55K-dependent SUMOylation of TP53.</text>
</comment>
<comment type="domain">
    <text evidence="1">Contains a PML interaction motif that allows the subnuclear PML localization.</text>
</comment>
<comment type="similarity">
    <text evidence="4">Belongs to the adenoviridae E1B 55 kDa protein family.</text>
</comment>
<comment type="sequence caution" evidence="4">
    <conflict type="erroneous initiation">
        <sequence resource="EMBL-CDS" id="AAA42472"/>
    </conflict>
</comment>
<accession>P14266</accession>
<accession>P90264</accession>
<organism>
    <name type="scientific">Canine adenovirus serotype 2 (strain Toronto A 26-61)</name>
    <name type="common">CAdV-2</name>
    <name type="synonym">Canine adenovirus 2 (strain Toronto A 26-61)</name>
    <dbReference type="NCBI Taxonomy" id="69152"/>
    <lineage>
        <taxon>Viruses</taxon>
        <taxon>Varidnaviria</taxon>
        <taxon>Bamfordvirae</taxon>
        <taxon>Preplasmiviricota</taxon>
        <taxon>Tectiliviricetes</taxon>
        <taxon>Rowavirales</taxon>
        <taxon>Adenoviridae</taxon>
        <taxon>Mastadenovirus</taxon>
        <taxon>Canine mastadenovirus A</taxon>
    </lineage>
</organism>
<feature type="chain" id="PRO_0000221732" description="E1B 55 kDa protein">
    <location>
        <begin position="1"/>
        <end position="444"/>
    </location>
</feature>
<feature type="region of interest" description="Disordered" evidence="3">
    <location>
        <begin position="1"/>
        <end position="35"/>
    </location>
</feature>
<feature type="modified residue" description="Phosphoserine" evidence="1">
    <location>
        <position position="438"/>
    </location>
</feature>
<feature type="modified residue" description="Phosphoserine" evidence="1">
    <location>
        <position position="439"/>
    </location>
</feature>
<reference key="1">
    <citation type="journal article" date="1989" name="Virology">
        <title>Nucleotide sequence of E1 region of canine adenovirus type 2.</title>
        <authorList>
            <person name="Shibata R."/>
            <person name="Shinagawa M."/>
            <person name="Iida Y."/>
            <person name="Tsukiyama T."/>
        </authorList>
    </citation>
    <scope>NUCLEOTIDE SEQUENCE [GENOMIC DNA]</scope>
</reference>
<reference key="2">
    <citation type="submission" date="1996-12" db="EMBL/GenBank/DDBJ databases">
        <title>Complete DNA sequence and genomic organization of canine adenovirus type 2.</title>
        <authorList>
            <person name="Campbell J.B."/>
            <person name="Zhao Y."/>
        </authorList>
    </citation>
    <scope>NUCLEOTIDE SEQUENCE [LARGE SCALE GENOMIC DNA]</scope>
</reference>
<reference key="3">
    <citation type="journal article" date="2003" name="J. Gen. Virol.">
        <title>Genetic content and evolution of adenoviruses.</title>
        <authorList>
            <person name="Davison A.J."/>
            <person name="Benko M."/>
            <person name="Harrach B."/>
        </authorList>
    </citation>
    <scope>GENOME ANNOTATION</scope>
</reference>